<organism>
    <name type="scientific">Hirudo medicinalis</name>
    <name type="common">Medicinal leech</name>
    <dbReference type="NCBI Taxonomy" id="6421"/>
    <lineage>
        <taxon>Eukaryota</taxon>
        <taxon>Metazoa</taxon>
        <taxon>Spiralia</taxon>
        <taxon>Lophotrochozoa</taxon>
        <taxon>Annelida</taxon>
        <taxon>Clitellata</taxon>
        <taxon>Hirudinea</taxon>
        <taxon>Hirudinida</taxon>
        <taxon>Hirudiniformes</taxon>
        <taxon>Hirudinidae</taxon>
        <taxon>Hirudo</taxon>
    </lineage>
</organism>
<proteinExistence type="inferred from homology"/>
<comment type="subcellular location">
    <subcellularLocation>
        <location>Secreted</location>
    </subcellularLocation>
</comment>
<comment type="similarity">
    <text evidence="3">Belongs to the macin family.</text>
</comment>
<sequence length="82" mass="9315">MALLNKLLCFALVFMIFGEFVTPDCYEDWSRCTPGTSFLTGILWKDCHSRCKELGHRGGRCVDSPSKHCPGVLKNNKQCHCY</sequence>
<reference key="1">
    <citation type="journal article" date="2008" name="J. Immunol.">
        <title>Microbial challenge promotes the regenerative process of the injured central nervous system of the medicinal leech by inducing the synthesis of antimicrobial peptides in neurons and microglia.</title>
        <authorList>
            <person name="Schikorski D."/>
            <person name="Cuvillier-Hot V."/>
            <person name="Leippe M."/>
            <person name="Boidin-Wichlacz C."/>
            <person name="Slomianny C."/>
            <person name="Macagno E."/>
            <person name="Salzet M."/>
            <person name="Tasiemski A."/>
        </authorList>
    </citation>
    <scope>NUCLEOTIDE SEQUENCE [MRNA]</scope>
</reference>
<evidence type="ECO:0000250" key="1"/>
<evidence type="ECO:0000255" key="2"/>
<evidence type="ECO:0000305" key="3"/>
<feature type="signal peptide" evidence="2">
    <location>
        <begin position="1"/>
        <end position="23"/>
    </location>
</feature>
<feature type="chain" id="PRO_0000342203" description="Neuromacin">
    <location>
        <begin position="24"/>
        <end position="82"/>
    </location>
</feature>
<feature type="disulfide bond" evidence="1">
    <location>
        <begin position="25"/>
        <end position="32"/>
    </location>
</feature>
<feature type="disulfide bond" evidence="1">
    <location>
        <begin position="47"/>
        <end position="51"/>
    </location>
</feature>
<feature type="disulfide bond" evidence="1">
    <location>
        <begin position="61"/>
        <end position="69"/>
    </location>
</feature>
<feature type="disulfide bond" evidence="1">
    <location>
        <begin position="79"/>
        <end position="81"/>
    </location>
</feature>
<keyword id="KW-0929">Antimicrobial</keyword>
<keyword id="KW-1015">Disulfide bond</keyword>
<keyword id="KW-0964">Secreted</keyword>
<keyword id="KW-0732">Signal</keyword>
<protein>
    <recommendedName>
        <fullName>Neuromacin</fullName>
    </recommendedName>
</protein>
<name>NEURM_HIRME</name>
<dbReference type="EMBL" id="EU156754">
    <property type="protein sequence ID" value="ABW97519.1"/>
    <property type="molecule type" value="mRNA"/>
</dbReference>
<dbReference type="SMR" id="A8V0B3"/>
<dbReference type="GO" id="GO:0005576">
    <property type="term" value="C:extracellular region"/>
    <property type="evidence" value="ECO:0007669"/>
    <property type="project" value="UniProtKB-SubCell"/>
</dbReference>
<dbReference type="GO" id="GO:0006952">
    <property type="term" value="P:defense response"/>
    <property type="evidence" value="ECO:0007669"/>
    <property type="project" value="InterPro"/>
</dbReference>
<dbReference type="Gene3D" id="3.30.30.100">
    <property type="match status" value="1"/>
</dbReference>
<dbReference type="InterPro" id="IPR029230">
    <property type="entry name" value="Macin"/>
</dbReference>
<dbReference type="InterPro" id="IPR038456">
    <property type="entry name" value="Macin_sf"/>
</dbReference>
<dbReference type="Pfam" id="PF14865">
    <property type="entry name" value="Macin"/>
    <property type="match status" value="1"/>
</dbReference>
<accession>A8V0B3</accession>